<name>DEGP_SALTY</name>
<accession>P26982</accession>
<sequence>MKKTTLAMSALALSLGLALSPLSATAAETSSSAMTAQQMPSLAPMLEKVMPSVVSINVEGSTTVNTPRMPRNFQQFFGDDSPFCQDGSPFQNSPFCQGGGNGGNGGQQQKFMALGSGVIIDAAKGYVVTNNHVVDNASVIKVQLSDGRKFDAKVVGKDPRSDIALIQIQNPKNLTAIKLADSDALRVGDYTVAIGNPFGLGETVTSGIVSALGRSGLNVENYENFIQTDAAINRGNSGGALVNLNGELIGINTAILAPDGGNIGIGFAIPSNMVKNLTSQMVEYGQVKRGELGIMGTELNSELAKAMKVDAQRGAFVSQVMPNSSAAKAGIKAGDVITSLNGKPISSFAALRAQVGTMPVGSKISLGLLREGKAITVNLELQQSSQSQVDSSTIFSGIEGAEMSNKGQDKGVVVSSVKANSPAAQIGLKKGDVIIGANQQPVKNIAELRKILDSKPSVLALNIQRGDSSIYLLMQ</sequence>
<organism>
    <name type="scientific">Salmonella typhimurium (strain LT2 / SGSC1412 / ATCC 700720)</name>
    <dbReference type="NCBI Taxonomy" id="99287"/>
    <lineage>
        <taxon>Bacteria</taxon>
        <taxon>Pseudomonadati</taxon>
        <taxon>Pseudomonadota</taxon>
        <taxon>Gammaproteobacteria</taxon>
        <taxon>Enterobacterales</taxon>
        <taxon>Enterobacteriaceae</taxon>
        <taxon>Salmonella</taxon>
    </lineage>
</organism>
<gene>
    <name type="primary">degP</name>
    <name type="synonym">htrA</name>
    <name type="synonym">ptd</name>
    <name type="ordered locus">STM0209</name>
</gene>
<feature type="signal peptide" evidence="1">
    <location>
        <begin position="1"/>
        <end position="26"/>
    </location>
</feature>
<feature type="chain" id="PRO_0000026922" description="Periplasmic serine endoprotease DegP">
    <location>
        <begin position="27"/>
        <end position="475"/>
    </location>
</feature>
<feature type="domain" description="PDZ 1" evidence="3">
    <location>
        <begin position="281"/>
        <end position="372"/>
    </location>
</feature>
<feature type="domain" description="PDZ 2" evidence="3">
    <location>
        <begin position="378"/>
        <end position="467"/>
    </location>
</feature>
<feature type="active site" description="Charge relay system" evidence="2">
    <location>
        <position position="132"/>
    </location>
</feature>
<feature type="active site" description="Charge relay system" evidence="2">
    <location>
        <position position="162"/>
    </location>
</feature>
<feature type="active site" description="Charge relay system" evidence="2">
    <location>
        <position position="237"/>
    </location>
</feature>
<feature type="binding site" evidence="1">
    <location>
        <position position="59"/>
    </location>
    <ligand>
        <name>substrate</name>
    </ligand>
</feature>
<feature type="binding site" evidence="1">
    <location>
        <position position="132"/>
    </location>
    <ligand>
        <name>substrate</name>
    </ligand>
</feature>
<feature type="binding site" evidence="1">
    <location>
        <position position="162"/>
    </location>
    <ligand>
        <name>substrate</name>
    </ligand>
</feature>
<feature type="binding site" evidence="1">
    <location>
        <begin position="235"/>
        <end position="237"/>
    </location>
    <ligand>
        <name>substrate</name>
    </ligand>
</feature>
<feature type="binding site" evidence="1">
    <location>
        <begin position="253"/>
        <end position="257"/>
    </location>
    <ligand>
        <name>substrate</name>
    </ligand>
</feature>
<feature type="binding site" evidence="1">
    <location>
        <begin position="292"/>
        <end position="296"/>
    </location>
    <ligand>
        <name>substrate</name>
    </ligand>
</feature>
<feature type="disulfide bond" evidence="1">
    <location>
        <begin position="84"/>
        <end position="96"/>
    </location>
</feature>
<evidence type="ECO:0000250" key="1"/>
<evidence type="ECO:0000250" key="2">
    <source>
        <dbReference type="UniProtKB" id="P0C0V0"/>
    </source>
</evidence>
<evidence type="ECO:0000255" key="3">
    <source>
        <dbReference type="PROSITE-ProRule" id="PRU00143"/>
    </source>
</evidence>
<evidence type="ECO:0000305" key="4"/>
<keyword id="KW-0997">Cell inner membrane</keyword>
<keyword id="KW-1003">Cell membrane</keyword>
<keyword id="KW-1015">Disulfide bond</keyword>
<keyword id="KW-0378">Hydrolase</keyword>
<keyword id="KW-0472">Membrane</keyword>
<keyword id="KW-0645">Protease</keyword>
<keyword id="KW-1185">Reference proteome</keyword>
<keyword id="KW-0677">Repeat</keyword>
<keyword id="KW-0720">Serine protease</keyword>
<keyword id="KW-0732">Signal</keyword>
<keyword id="KW-0346">Stress response</keyword>
<proteinExistence type="inferred from homology"/>
<protein>
    <recommendedName>
        <fullName>Periplasmic serine endoprotease DegP</fullName>
        <ecNumber>3.4.21.107</ecNumber>
    </recommendedName>
    <alternativeName>
        <fullName>Heat shock protein DegP</fullName>
    </alternativeName>
    <alternativeName>
        <fullName>Protease Do</fullName>
    </alternativeName>
</protein>
<reference key="1">
    <citation type="journal article" date="1991" name="Mol. Microbiol.">
        <title>The role of a stress-response protein in Salmonella typhimurium virulence.</title>
        <authorList>
            <person name="Johnson K."/>
            <person name="Charles I."/>
            <person name="Dougan G."/>
            <person name="Pickard D."/>
            <person name="O'Gaora P."/>
            <person name="Costa G."/>
            <person name="Ali T."/>
            <person name="Miller I."/>
            <person name="Hormaeche C."/>
        </authorList>
    </citation>
    <scope>NUCLEOTIDE SEQUENCE [GENOMIC DNA]</scope>
    <source>
        <strain>C5</strain>
    </source>
</reference>
<reference key="2">
    <citation type="journal article" date="2001" name="Nature">
        <title>Complete genome sequence of Salmonella enterica serovar Typhimurium LT2.</title>
        <authorList>
            <person name="McClelland M."/>
            <person name="Sanderson K.E."/>
            <person name="Spieth J."/>
            <person name="Clifton S.W."/>
            <person name="Latreille P."/>
            <person name="Courtney L."/>
            <person name="Porwollik S."/>
            <person name="Ali J."/>
            <person name="Dante M."/>
            <person name="Du F."/>
            <person name="Hou S."/>
            <person name="Layman D."/>
            <person name="Leonard S."/>
            <person name="Nguyen C."/>
            <person name="Scott K."/>
            <person name="Holmes A."/>
            <person name="Grewal N."/>
            <person name="Mulvaney E."/>
            <person name="Ryan E."/>
            <person name="Sun H."/>
            <person name="Florea L."/>
            <person name="Miller W."/>
            <person name="Stoneking T."/>
            <person name="Nhan M."/>
            <person name="Waterston R."/>
            <person name="Wilson R.K."/>
        </authorList>
    </citation>
    <scope>NUCLEOTIDE SEQUENCE [LARGE SCALE GENOMIC DNA]</scope>
    <source>
        <strain>LT2 / SGSC1412 / ATCC 700720</strain>
    </source>
</reference>
<comment type="function">
    <text evidence="1">DegP acts as a chaperone at low temperatures but switches to a peptidase (heat shock protein) at higher temperatures. It degrades transiently denatured and unfolded proteins which accumulate in the periplasm following heat shock or other stress conditions. DegP is efficient with Val-Xaa and Ile-Xaa peptide bonds, suggesting a preference for beta-branched side chain amino acids. Only unfolded proteins devoid of disulfide bonds appear capable of being cleaved, thereby preventing non-specific proteolysis of folded proteins. Its proteolytic activity is essential for the survival of cells at elevated temperatures. It can degrade IciA, ada, casein, globin and PapA. DegP shares specificity with DegQ. DegP is also involved in the biogenesis of partially folded outer-membrane proteins (OMP) (By similarity).</text>
</comment>
<comment type="catalytic activity">
    <reaction>
        <text>Acts on substrates that are at least partially unfolded. The cleavage site P1 residue is normally between a pair of hydrophobic residues, such as Val-|-Val.</text>
        <dbReference type="EC" id="3.4.21.107"/>
    </reaction>
</comment>
<comment type="subunit">
    <text evidence="1">DegP can reversibly switch between different oligomeric forms that represent inactive (6-mer) and active (12- and 24-mer) protease states. Substrate binding triggers the conversion of the resting DegP trimer and hexamer into catalytically active 12- and 24-mers. The conversion of 6-mer (DegP6) into 12-mer (DegP12) or 24-mer (DegP24) is crucial in regulating protease activity (By similarity).</text>
</comment>
<comment type="subcellular location">
    <subcellularLocation>
        <location evidence="1">Cell inner membrane</location>
        <topology evidence="1">Peripheral membrane protein</topology>
        <orientation evidence="1">Cytoplasmic side</orientation>
    </subcellularLocation>
</comment>
<comment type="miscellaneous">
    <text evidence="1">DegP is indispensable for bacterial survival at temperatures above 42 degrees Celsius, however is also able to digest its natural substrates in a reducing environment at temperatures as low as 20 degrees Celsius.</text>
</comment>
<comment type="similarity">
    <text evidence="4">Belongs to the peptidase S1C family.</text>
</comment>
<dbReference type="EC" id="3.4.21.107"/>
<dbReference type="EMBL" id="X54548">
    <property type="protein sequence ID" value="CAA38420.1"/>
    <property type="molecule type" value="Genomic_DNA"/>
</dbReference>
<dbReference type="EMBL" id="AE006468">
    <property type="protein sequence ID" value="AAL19173.1"/>
    <property type="molecule type" value="Genomic_DNA"/>
</dbReference>
<dbReference type="PIR" id="S15337">
    <property type="entry name" value="S15337"/>
</dbReference>
<dbReference type="RefSeq" id="NP_459214.1">
    <property type="nucleotide sequence ID" value="NC_003197.2"/>
</dbReference>
<dbReference type="RefSeq" id="WP_000753958.1">
    <property type="nucleotide sequence ID" value="NC_003197.2"/>
</dbReference>
<dbReference type="SMR" id="P26982"/>
<dbReference type="STRING" id="99287.STM0209"/>
<dbReference type="MEROPS" id="S01.273"/>
<dbReference type="PaxDb" id="99287-STM0209"/>
<dbReference type="GeneID" id="1251727"/>
<dbReference type="KEGG" id="stm:STM0209"/>
<dbReference type="PATRIC" id="fig|99287.12.peg.222"/>
<dbReference type="HOGENOM" id="CLU_020120_1_1_6"/>
<dbReference type="OMA" id="RALFQIQ"/>
<dbReference type="PhylomeDB" id="P26982"/>
<dbReference type="BioCyc" id="SENT99287:STM0209-MONOMER"/>
<dbReference type="BRENDA" id="3.4.21.107">
    <property type="organism ID" value="5542"/>
</dbReference>
<dbReference type="Proteomes" id="UP000001014">
    <property type="component" value="Chromosome"/>
</dbReference>
<dbReference type="GO" id="GO:0030288">
    <property type="term" value="C:outer membrane-bounded periplasmic space"/>
    <property type="evidence" value="ECO:0000250"/>
    <property type="project" value="UniProtKB"/>
</dbReference>
<dbReference type="GO" id="GO:0042597">
    <property type="term" value="C:periplasmic space"/>
    <property type="evidence" value="ECO:0000318"/>
    <property type="project" value="GO_Central"/>
</dbReference>
<dbReference type="GO" id="GO:0005886">
    <property type="term" value="C:plasma membrane"/>
    <property type="evidence" value="ECO:0007669"/>
    <property type="project" value="UniProtKB-SubCell"/>
</dbReference>
<dbReference type="GO" id="GO:0042802">
    <property type="term" value="F:identical protein binding"/>
    <property type="evidence" value="ECO:0000250"/>
    <property type="project" value="UniProtKB"/>
</dbReference>
<dbReference type="GO" id="GO:0004252">
    <property type="term" value="F:serine-type endopeptidase activity"/>
    <property type="evidence" value="ECO:0000250"/>
    <property type="project" value="UniProtKB"/>
</dbReference>
<dbReference type="GO" id="GO:0006457">
    <property type="term" value="P:protein folding"/>
    <property type="evidence" value="ECO:0000250"/>
    <property type="project" value="UniProtKB"/>
</dbReference>
<dbReference type="GO" id="GO:0006515">
    <property type="term" value="P:protein quality control for misfolded or incompletely synthesized proteins"/>
    <property type="evidence" value="ECO:0000250"/>
    <property type="project" value="UniProtKB"/>
</dbReference>
<dbReference type="GO" id="GO:0006508">
    <property type="term" value="P:proteolysis"/>
    <property type="evidence" value="ECO:0000250"/>
    <property type="project" value="UniProtKB"/>
</dbReference>
<dbReference type="GO" id="GO:0006979">
    <property type="term" value="P:response to oxidative stress"/>
    <property type="evidence" value="ECO:0000250"/>
    <property type="project" value="UniProtKB"/>
</dbReference>
<dbReference type="GO" id="GO:0009266">
    <property type="term" value="P:response to temperature stimulus"/>
    <property type="evidence" value="ECO:0000250"/>
    <property type="project" value="UniProtKB"/>
</dbReference>
<dbReference type="CDD" id="cd10839">
    <property type="entry name" value="cpPDZ1_DegP-like"/>
    <property type="match status" value="1"/>
</dbReference>
<dbReference type="CDD" id="cd23084">
    <property type="entry name" value="cpPDZ2_DegP-like"/>
    <property type="match status" value="1"/>
</dbReference>
<dbReference type="FunFam" id="2.30.42.10:FF:000037">
    <property type="entry name" value="Periplasmic serine endoprotease DegP-like"/>
    <property type="match status" value="1"/>
</dbReference>
<dbReference type="FunFam" id="2.30.42.10:FF:000050">
    <property type="entry name" value="Periplasmic serine endoprotease DegP-like"/>
    <property type="match status" value="1"/>
</dbReference>
<dbReference type="FunFam" id="2.40.10.120:FF:000001">
    <property type="entry name" value="Periplasmic serine endoprotease DegP-like"/>
    <property type="match status" value="1"/>
</dbReference>
<dbReference type="FunFam" id="2.40.10.10:FF:000001">
    <property type="entry name" value="Periplasmic serine protease DegS"/>
    <property type="match status" value="1"/>
</dbReference>
<dbReference type="Gene3D" id="2.30.42.10">
    <property type="match status" value="2"/>
</dbReference>
<dbReference type="Gene3D" id="2.40.10.120">
    <property type="match status" value="1"/>
</dbReference>
<dbReference type="InterPro" id="IPR001478">
    <property type="entry name" value="PDZ"/>
</dbReference>
<dbReference type="InterPro" id="IPR036034">
    <property type="entry name" value="PDZ_sf"/>
</dbReference>
<dbReference type="InterPro" id="IPR011782">
    <property type="entry name" value="Pept_S1C_Do"/>
</dbReference>
<dbReference type="InterPro" id="IPR009003">
    <property type="entry name" value="Peptidase_S1_PA"/>
</dbReference>
<dbReference type="InterPro" id="IPR001940">
    <property type="entry name" value="Peptidase_S1C"/>
</dbReference>
<dbReference type="NCBIfam" id="TIGR02037">
    <property type="entry name" value="degP_htrA_DO"/>
    <property type="match status" value="1"/>
</dbReference>
<dbReference type="NCBIfam" id="NF008189">
    <property type="entry name" value="PRK10942.1"/>
    <property type="match status" value="1"/>
</dbReference>
<dbReference type="PANTHER" id="PTHR22939">
    <property type="entry name" value="SERINE PROTEASE FAMILY S1C HTRA-RELATED"/>
    <property type="match status" value="1"/>
</dbReference>
<dbReference type="PANTHER" id="PTHR22939:SF129">
    <property type="entry name" value="SERINE PROTEASE HTRA2, MITOCHONDRIAL"/>
    <property type="match status" value="1"/>
</dbReference>
<dbReference type="Pfam" id="PF00595">
    <property type="entry name" value="PDZ"/>
    <property type="match status" value="2"/>
</dbReference>
<dbReference type="Pfam" id="PF13365">
    <property type="entry name" value="Trypsin_2"/>
    <property type="match status" value="1"/>
</dbReference>
<dbReference type="PRINTS" id="PR00834">
    <property type="entry name" value="PROTEASES2C"/>
</dbReference>
<dbReference type="SMART" id="SM00228">
    <property type="entry name" value="PDZ"/>
    <property type="match status" value="2"/>
</dbReference>
<dbReference type="SUPFAM" id="SSF50156">
    <property type="entry name" value="PDZ domain-like"/>
    <property type="match status" value="2"/>
</dbReference>
<dbReference type="SUPFAM" id="SSF50494">
    <property type="entry name" value="Trypsin-like serine proteases"/>
    <property type="match status" value="1"/>
</dbReference>
<dbReference type="PROSITE" id="PS50106">
    <property type="entry name" value="PDZ"/>
    <property type="match status" value="2"/>
</dbReference>